<keyword id="KW-0067">ATP-binding</keyword>
<keyword id="KW-0143">Chaperone</keyword>
<keyword id="KW-0963">Cytoplasm</keyword>
<keyword id="KW-0547">Nucleotide-binding</keyword>
<keyword id="KW-1185">Reference proteome</keyword>
<keyword id="KW-0346">Stress response</keyword>
<dbReference type="EMBL" id="AL111168">
    <property type="protein sequence ID" value="CAL34665.1"/>
    <property type="molecule type" value="Genomic_DNA"/>
</dbReference>
<dbReference type="PIR" id="G81397">
    <property type="entry name" value="G81397"/>
</dbReference>
<dbReference type="RefSeq" id="WP_002858566.1">
    <property type="nucleotide sequence ID" value="NZ_SZUC01000002.1"/>
</dbReference>
<dbReference type="RefSeq" id="YP_002343950.1">
    <property type="nucleotide sequence ID" value="NC_002163.1"/>
</dbReference>
<dbReference type="SMR" id="Q9PHZ3"/>
<dbReference type="IntAct" id="Q9PHZ3">
    <property type="interactions" value="6"/>
</dbReference>
<dbReference type="STRING" id="192222.Cj0518"/>
<dbReference type="PaxDb" id="192222-Cj0518"/>
<dbReference type="EnsemblBacteria" id="CAL34665">
    <property type="protein sequence ID" value="CAL34665"/>
    <property type="gene ID" value="Cj0518"/>
</dbReference>
<dbReference type="GeneID" id="904847"/>
<dbReference type="KEGG" id="cje:Cj0518"/>
<dbReference type="PATRIC" id="fig|192222.6.peg.511"/>
<dbReference type="eggNOG" id="COG0326">
    <property type="taxonomic scope" value="Bacteria"/>
</dbReference>
<dbReference type="HOGENOM" id="CLU_006684_3_0_7"/>
<dbReference type="OrthoDB" id="9802640at2"/>
<dbReference type="Proteomes" id="UP000000799">
    <property type="component" value="Chromosome"/>
</dbReference>
<dbReference type="GO" id="GO:0005737">
    <property type="term" value="C:cytoplasm"/>
    <property type="evidence" value="ECO:0007669"/>
    <property type="project" value="UniProtKB-SubCell"/>
</dbReference>
<dbReference type="GO" id="GO:0005524">
    <property type="term" value="F:ATP binding"/>
    <property type="evidence" value="ECO:0007669"/>
    <property type="project" value="UniProtKB-UniRule"/>
</dbReference>
<dbReference type="GO" id="GO:0016887">
    <property type="term" value="F:ATP hydrolysis activity"/>
    <property type="evidence" value="ECO:0007669"/>
    <property type="project" value="InterPro"/>
</dbReference>
<dbReference type="GO" id="GO:0140662">
    <property type="term" value="F:ATP-dependent protein folding chaperone"/>
    <property type="evidence" value="ECO:0007669"/>
    <property type="project" value="InterPro"/>
</dbReference>
<dbReference type="GO" id="GO:0051082">
    <property type="term" value="F:unfolded protein binding"/>
    <property type="evidence" value="ECO:0007669"/>
    <property type="project" value="UniProtKB-UniRule"/>
</dbReference>
<dbReference type="CDD" id="cd16927">
    <property type="entry name" value="HATPase_Hsp90-like"/>
    <property type="match status" value="1"/>
</dbReference>
<dbReference type="FunFam" id="3.30.565.10:FF:000009">
    <property type="entry name" value="Molecular chaperone HtpG"/>
    <property type="match status" value="1"/>
</dbReference>
<dbReference type="Gene3D" id="3.30.230.80">
    <property type="match status" value="1"/>
</dbReference>
<dbReference type="Gene3D" id="3.40.50.11260">
    <property type="match status" value="1"/>
</dbReference>
<dbReference type="Gene3D" id="1.20.120.790">
    <property type="entry name" value="Heat shock protein 90, C-terminal domain"/>
    <property type="match status" value="1"/>
</dbReference>
<dbReference type="Gene3D" id="3.30.565.10">
    <property type="entry name" value="Histidine kinase-like ATPase, C-terminal domain"/>
    <property type="match status" value="1"/>
</dbReference>
<dbReference type="HAMAP" id="MF_00505">
    <property type="entry name" value="HSP90"/>
    <property type="match status" value="1"/>
</dbReference>
<dbReference type="InterPro" id="IPR036890">
    <property type="entry name" value="HATPase_C_sf"/>
</dbReference>
<dbReference type="InterPro" id="IPR019805">
    <property type="entry name" value="Heat_shock_protein_90_CS"/>
</dbReference>
<dbReference type="InterPro" id="IPR037196">
    <property type="entry name" value="HSP90_C"/>
</dbReference>
<dbReference type="InterPro" id="IPR001404">
    <property type="entry name" value="Hsp90_fam"/>
</dbReference>
<dbReference type="InterPro" id="IPR020575">
    <property type="entry name" value="Hsp90_N"/>
</dbReference>
<dbReference type="InterPro" id="IPR020568">
    <property type="entry name" value="Ribosomal_Su5_D2-typ_SF"/>
</dbReference>
<dbReference type="NCBIfam" id="NF003555">
    <property type="entry name" value="PRK05218.1"/>
    <property type="match status" value="1"/>
</dbReference>
<dbReference type="PANTHER" id="PTHR11528">
    <property type="entry name" value="HEAT SHOCK PROTEIN 90 FAMILY MEMBER"/>
    <property type="match status" value="1"/>
</dbReference>
<dbReference type="Pfam" id="PF13589">
    <property type="entry name" value="HATPase_c_3"/>
    <property type="match status" value="1"/>
</dbReference>
<dbReference type="Pfam" id="PF00183">
    <property type="entry name" value="HSP90"/>
    <property type="match status" value="1"/>
</dbReference>
<dbReference type="PIRSF" id="PIRSF002583">
    <property type="entry name" value="Hsp90"/>
    <property type="match status" value="1"/>
</dbReference>
<dbReference type="PRINTS" id="PR00775">
    <property type="entry name" value="HEATSHOCK90"/>
</dbReference>
<dbReference type="SMART" id="SM00387">
    <property type="entry name" value="HATPase_c"/>
    <property type="match status" value="1"/>
</dbReference>
<dbReference type="SUPFAM" id="SSF55874">
    <property type="entry name" value="ATPase domain of HSP90 chaperone/DNA topoisomerase II/histidine kinase"/>
    <property type="match status" value="1"/>
</dbReference>
<dbReference type="SUPFAM" id="SSF110942">
    <property type="entry name" value="HSP90 C-terminal domain"/>
    <property type="match status" value="1"/>
</dbReference>
<dbReference type="SUPFAM" id="SSF54211">
    <property type="entry name" value="Ribosomal protein S5 domain 2-like"/>
    <property type="match status" value="1"/>
</dbReference>
<dbReference type="PROSITE" id="PS00298">
    <property type="entry name" value="HSP90"/>
    <property type="match status" value="1"/>
</dbReference>
<sequence>MQFQTEVNQLLQLMIHSLYSNKEIFLRELISNASDALDKLNFLSVSDDKYKSLKFEPKIEIKIDKDKKTLSISDNGIGMDKDDLINNLGTIAKSGTKSFLENLSGDAKKDSQLIGQFGVGFYSAFMVASKIEVLSKKALDDKAYLWSSDANGYEIDDANKEEQGTSITLYLKDDEFANAYKIESIIEKYSNHIQFPIFMEKEEFTPAKEGEEEGKTELKISQINKANALWRMQKSSLKAEDYERFYEQNFHDSNKPLLYLHTKSEGKLEYNSLFFIPQNAPFDLFRVDYQSGLKLYVKRVFISDDDKELLPTYLRFVRGIIDVEDLPLNVSREILQENQILKGIKEASVKKILGELEKLKNNDKEKYLSFFKTFGKVLKEGLYGFGGEKDSLLKLMLYKSTKGENLRSLEEYKNDLQGEQKEIFYIAGNNESLLRTSPLLEEYKQKNIEVLLMDDEIDSLVTPMLEFEGLKFVSINQVEDKNELSDEEKNTFAPLVAKFKELLKDQVEDVRLTSRLKDSPSCIVYDKNKPDFAMQQLLKQMGQEQNFKPILEINPKHAIFTGLKNNESFSADIATLVLNMAKLSEGMGVDNPAEFNASLTKIINKAFS</sequence>
<protein>
    <recommendedName>
        <fullName evidence="1">Chaperone protein HtpG</fullName>
    </recommendedName>
    <alternativeName>
        <fullName evidence="1">Heat shock protein HtpG</fullName>
    </alternativeName>
    <alternativeName>
        <fullName evidence="1">High temperature protein G</fullName>
    </alternativeName>
</protein>
<reference key="1">
    <citation type="journal article" date="2000" name="Nature">
        <title>The genome sequence of the food-borne pathogen Campylobacter jejuni reveals hypervariable sequences.</title>
        <authorList>
            <person name="Parkhill J."/>
            <person name="Wren B.W."/>
            <person name="Mungall K.L."/>
            <person name="Ketley J.M."/>
            <person name="Churcher C.M."/>
            <person name="Basham D."/>
            <person name="Chillingworth T."/>
            <person name="Davies R.M."/>
            <person name="Feltwell T."/>
            <person name="Holroyd S."/>
            <person name="Jagels K."/>
            <person name="Karlyshev A.V."/>
            <person name="Moule S."/>
            <person name="Pallen M.J."/>
            <person name="Penn C.W."/>
            <person name="Quail M.A."/>
            <person name="Rajandream M.A."/>
            <person name="Rutherford K.M."/>
            <person name="van Vliet A.H.M."/>
            <person name="Whitehead S."/>
            <person name="Barrell B.G."/>
        </authorList>
    </citation>
    <scope>NUCLEOTIDE SEQUENCE [LARGE SCALE GENOMIC DNA]</scope>
    <source>
        <strain>ATCC 700819 / NCTC 11168</strain>
    </source>
</reference>
<proteinExistence type="inferred from homology"/>
<organism>
    <name type="scientific">Campylobacter jejuni subsp. jejuni serotype O:2 (strain ATCC 700819 / NCTC 11168)</name>
    <dbReference type="NCBI Taxonomy" id="192222"/>
    <lineage>
        <taxon>Bacteria</taxon>
        <taxon>Pseudomonadati</taxon>
        <taxon>Campylobacterota</taxon>
        <taxon>Epsilonproteobacteria</taxon>
        <taxon>Campylobacterales</taxon>
        <taxon>Campylobacteraceae</taxon>
        <taxon>Campylobacter</taxon>
    </lineage>
</organism>
<gene>
    <name evidence="1" type="primary">htpG</name>
    <name type="ordered locus">Cj0518</name>
</gene>
<accession>Q9PHZ3</accession>
<accession>Q0PAZ7</accession>
<evidence type="ECO:0000255" key="1">
    <source>
        <dbReference type="HAMAP-Rule" id="MF_00505"/>
    </source>
</evidence>
<feature type="chain" id="PRO_0000062978" description="Chaperone protein HtpG">
    <location>
        <begin position="1"/>
        <end position="608"/>
    </location>
</feature>
<feature type="region of interest" description="A; substrate-binding" evidence="1">
    <location>
        <begin position="1"/>
        <end position="332"/>
    </location>
</feature>
<feature type="region of interest" description="B" evidence="1">
    <location>
        <begin position="333"/>
        <end position="536"/>
    </location>
</feature>
<feature type="region of interest" description="C" evidence="1">
    <location>
        <begin position="537"/>
        <end position="608"/>
    </location>
</feature>
<comment type="function">
    <text evidence="1">Molecular chaperone. Has ATPase activity.</text>
</comment>
<comment type="subunit">
    <text evidence="1">Homodimer.</text>
</comment>
<comment type="subcellular location">
    <subcellularLocation>
        <location evidence="1">Cytoplasm</location>
    </subcellularLocation>
</comment>
<comment type="similarity">
    <text evidence="1">Belongs to the heat shock protein 90 family.</text>
</comment>
<name>HTPG_CAMJE</name>